<feature type="chain" id="PRO_0000256548" description="Trigger factor">
    <location>
        <begin position="1"/>
        <end position="526"/>
    </location>
</feature>
<feature type="domain" description="PPIase FKBP-type" evidence="1">
    <location>
        <begin position="162"/>
        <end position="243"/>
    </location>
</feature>
<feature type="region of interest" description="Disordered" evidence="2">
    <location>
        <begin position="425"/>
        <end position="526"/>
    </location>
</feature>
<feature type="compositionally biased region" description="Basic and acidic residues" evidence="2">
    <location>
        <begin position="425"/>
        <end position="460"/>
    </location>
</feature>
<feature type="compositionally biased region" description="Basic residues" evidence="2">
    <location>
        <begin position="461"/>
        <end position="517"/>
    </location>
</feature>
<reference key="1">
    <citation type="journal article" date="2005" name="J. Bacteriol.">
        <title>Complete genome sequence and analysis of the multiresistant nosocomial pathogen Corynebacterium jeikeium K411, a lipid-requiring bacterium of the human skin flora.</title>
        <authorList>
            <person name="Tauch A."/>
            <person name="Kaiser O."/>
            <person name="Hain T."/>
            <person name="Goesmann A."/>
            <person name="Weisshaar B."/>
            <person name="Albersmeier A."/>
            <person name="Bekel T."/>
            <person name="Bischoff N."/>
            <person name="Brune I."/>
            <person name="Chakraborty T."/>
            <person name="Kalinowski J."/>
            <person name="Meyer F."/>
            <person name="Rupp O."/>
            <person name="Schneiker S."/>
            <person name="Viehoever P."/>
            <person name="Puehler A."/>
        </authorList>
    </citation>
    <scope>NUCLEOTIDE SEQUENCE [LARGE SCALE GENOMIC DNA]</scope>
    <source>
        <strain>K411</strain>
    </source>
</reference>
<organism>
    <name type="scientific">Corynebacterium jeikeium (strain K411)</name>
    <dbReference type="NCBI Taxonomy" id="306537"/>
    <lineage>
        <taxon>Bacteria</taxon>
        <taxon>Bacillati</taxon>
        <taxon>Actinomycetota</taxon>
        <taxon>Actinomycetes</taxon>
        <taxon>Mycobacteriales</taxon>
        <taxon>Corynebacteriaceae</taxon>
        <taxon>Corynebacterium</taxon>
    </lineage>
</organism>
<dbReference type="EC" id="5.2.1.8" evidence="1"/>
<dbReference type="EMBL" id="CR931997">
    <property type="protein sequence ID" value="CAI36702.1"/>
    <property type="molecule type" value="Genomic_DNA"/>
</dbReference>
<dbReference type="RefSeq" id="WP_011273207.1">
    <property type="nucleotide sequence ID" value="NC_007164.1"/>
</dbReference>
<dbReference type="SMR" id="Q4JWV5"/>
<dbReference type="STRING" id="306537.jk0543"/>
<dbReference type="KEGG" id="cjk:jk0543"/>
<dbReference type="PATRIC" id="fig|306537.10.peg.555"/>
<dbReference type="eggNOG" id="COG0544">
    <property type="taxonomic scope" value="Bacteria"/>
</dbReference>
<dbReference type="HOGENOM" id="CLU_033058_3_0_11"/>
<dbReference type="OrthoDB" id="9767721at2"/>
<dbReference type="Proteomes" id="UP000000545">
    <property type="component" value="Chromosome"/>
</dbReference>
<dbReference type="GO" id="GO:0005737">
    <property type="term" value="C:cytoplasm"/>
    <property type="evidence" value="ECO:0007669"/>
    <property type="project" value="UniProtKB-SubCell"/>
</dbReference>
<dbReference type="GO" id="GO:0003755">
    <property type="term" value="F:peptidyl-prolyl cis-trans isomerase activity"/>
    <property type="evidence" value="ECO:0007669"/>
    <property type="project" value="UniProtKB-UniRule"/>
</dbReference>
<dbReference type="GO" id="GO:0044183">
    <property type="term" value="F:protein folding chaperone"/>
    <property type="evidence" value="ECO:0007669"/>
    <property type="project" value="TreeGrafter"/>
</dbReference>
<dbReference type="GO" id="GO:0043022">
    <property type="term" value="F:ribosome binding"/>
    <property type="evidence" value="ECO:0007669"/>
    <property type="project" value="TreeGrafter"/>
</dbReference>
<dbReference type="GO" id="GO:0051083">
    <property type="term" value="P:'de novo' cotranslational protein folding"/>
    <property type="evidence" value="ECO:0007669"/>
    <property type="project" value="TreeGrafter"/>
</dbReference>
<dbReference type="GO" id="GO:0051301">
    <property type="term" value="P:cell division"/>
    <property type="evidence" value="ECO:0007669"/>
    <property type="project" value="UniProtKB-KW"/>
</dbReference>
<dbReference type="GO" id="GO:0061077">
    <property type="term" value="P:chaperone-mediated protein folding"/>
    <property type="evidence" value="ECO:0007669"/>
    <property type="project" value="TreeGrafter"/>
</dbReference>
<dbReference type="GO" id="GO:0015031">
    <property type="term" value="P:protein transport"/>
    <property type="evidence" value="ECO:0007669"/>
    <property type="project" value="UniProtKB-UniRule"/>
</dbReference>
<dbReference type="GO" id="GO:0043335">
    <property type="term" value="P:protein unfolding"/>
    <property type="evidence" value="ECO:0007669"/>
    <property type="project" value="TreeGrafter"/>
</dbReference>
<dbReference type="Gene3D" id="3.10.50.40">
    <property type="match status" value="1"/>
</dbReference>
<dbReference type="Gene3D" id="3.30.70.1050">
    <property type="entry name" value="Trigger factor ribosome-binding domain"/>
    <property type="match status" value="1"/>
</dbReference>
<dbReference type="Gene3D" id="1.10.3120.10">
    <property type="entry name" value="Trigger factor, C-terminal domain"/>
    <property type="match status" value="1"/>
</dbReference>
<dbReference type="HAMAP" id="MF_00303">
    <property type="entry name" value="Trigger_factor_Tig"/>
    <property type="match status" value="1"/>
</dbReference>
<dbReference type="InterPro" id="IPR046357">
    <property type="entry name" value="PPIase_dom_sf"/>
</dbReference>
<dbReference type="InterPro" id="IPR001179">
    <property type="entry name" value="PPIase_FKBP_dom"/>
</dbReference>
<dbReference type="InterPro" id="IPR005215">
    <property type="entry name" value="Trig_fac"/>
</dbReference>
<dbReference type="InterPro" id="IPR008880">
    <property type="entry name" value="Trigger_fac_C"/>
</dbReference>
<dbReference type="InterPro" id="IPR037041">
    <property type="entry name" value="Trigger_fac_C_sf"/>
</dbReference>
<dbReference type="InterPro" id="IPR008881">
    <property type="entry name" value="Trigger_fac_ribosome-bd_bac"/>
</dbReference>
<dbReference type="InterPro" id="IPR036611">
    <property type="entry name" value="Trigger_fac_ribosome-bd_sf"/>
</dbReference>
<dbReference type="InterPro" id="IPR027304">
    <property type="entry name" value="Trigger_fact/SurA_dom_sf"/>
</dbReference>
<dbReference type="NCBIfam" id="TIGR00115">
    <property type="entry name" value="tig"/>
    <property type="match status" value="1"/>
</dbReference>
<dbReference type="PANTHER" id="PTHR30560">
    <property type="entry name" value="TRIGGER FACTOR CHAPERONE AND PEPTIDYL-PROLYL CIS/TRANS ISOMERASE"/>
    <property type="match status" value="1"/>
</dbReference>
<dbReference type="PANTHER" id="PTHR30560:SF3">
    <property type="entry name" value="TRIGGER FACTOR-LIKE PROTEIN TIG, CHLOROPLASTIC"/>
    <property type="match status" value="1"/>
</dbReference>
<dbReference type="Pfam" id="PF00254">
    <property type="entry name" value="FKBP_C"/>
    <property type="match status" value="1"/>
</dbReference>
<dbReference type="Pfam" id="PF05698">
    <property type="entry name" value="Trigger_C"/>
    <property type="match status" value="1"/>
</dbReference>
<dbReference type="Pfam" id="PF05697">
    <property type="entry name" value="Trigger_N"/>
    <property type="match status" value="1"/>
</dbReference>
<dbReference type="SUPFAM" id="SSF54534">
    <property type="entry name" value="FKBP-like"/>
    <property type="match status" value="1"/>
</dbReference>
<dbReference type="SUPFAM" id="SSF109998">
    <property type="entry name" value="Triger factor/SurA peptide-binding domain-like"/>
    <property type="match status" value="1"/>
</dbReference>
<dbReference type="SUPFAM" id="SSF102735">
    <property type="entry name" value="Trigger factor ribosome-binding domain"/>
    <property type="match status" value="1"/>
</dbReference>
<dbReference type="PROSITE" id="PS50059">
    <property type="entry name" value="FKBP_PPIASE"/>
    <property type="match status" value="1"/>
</dbReference>
<protein>
    <recommendedName>
        <fullName evidence="1">Trigger factor</fullName>
        <shortName evidence="1">TF</shortName>
        <ecNumber evidence="1">5.2.1.8</ecNumber>
    </recommendedName>
    <alternativeName>
        <fullName evidence="1">PPIase</fullName>
    </alternativeName>
</protein>
<accession>Q4JWV5</accession>
<proteinExistence type="inferred from homology"/>
<evidence type="ECO:0000255" key="1">
    <source>
        <dbReference type="HAMAP-Rule" id="MF_00303"/>
    </source>
</evidence>
<evidence type="ECO:0000256" key="2">
    <source>
        <dbReference type="SAM" id="MobiDB-lite"/>
    </source>
</evidence>
<keyword id="KW-0131">Cell cycle</keyword>
<keyword id="KW-0132">Cell division</keyword>
<keyword id="KW-0143">Chaperone</keyword>
<keyword id="KW-0963">Cytoplasm</keyword>
<keyword id="KW-0413">Isomerase</keyword>
<keyword id="KW-1185">Reference proteome</keyword>
<keyword id="KW-0697">Rotamase</keyword>
<gene>
    <name evidence="1" type="primary">tig</name>
    <name type="ordered locus">jk0543</name>
</gene>
<comment type="function">
    <text evidence="1">Involved in protein export. Acts as a chaperone by maintaining the newly synthesized protein in an open conformation. Functions as a peptidyl-prolyl cis-trans isomerase.</text>
</comment>
<comment type="catalytic activity">
    <reaction evidence="1">
        <text>[protein]-peptidylproline (omega=180) = [protein]-peptidylproline (omega=0)</text>
        <dbReference type="Rhea" id="RHEA:16237"/>
        <dbReference type="Rhea" id="RHEA-COMP:10747"/>
        <dbReference type="Rhea" id="RHEA-COMP:10748"/>
        <dbReference type="ChEBI" id="CHEBI:83833"/>
        <dbReference type="ChEBI" id="CHEBI:83834"/>
        <dbReference type="EC" id="5.2.1.8"/>
    </reaction>
</comment>
<comment type="subcellular location">
    <subcellularLocation>
        <location>Cytoplasm</location>
    </subcellularLocation>
    <text evidence="1">About half TF is bound to the ribosome near the polypeptide exit tunnel while the other half is free in the cytoplasm.</text>
</comment>
<comment type="domain">
    <text evidence="1">Consists of 3 domains; the N-terminus binds the ribosome, the middle domain has PPIase activity, while the C-terminus has intrinsic chaperone activity on its own.</text>
</comment>
<comment type="similarity">
    <text evidence="1">Belongs to the FKBP-type PPIase family. Tig subfamily.</text>
</comment>
<sequence>MKSSVEKLSATRTKLTIEVPFEELKPEFDKAYATLAQQVNMPGFRKGKVPAKILEARLGRGVVLDQVINEMLPSRYSQAVEENDVKALGQPEIEIAELEDGKHITFTAEVDVRPEIEVPDFSAISVEVAPLKADDEAIDAELKNLQARFGTLKPADRAVKKGDFVSIDLSATIDGETVDEATTEGLSHEVGNDSLIEGLDDALVGMKEGEESTFTSKLVAGEHADEEAEVTVKLGSVKERELPELDDDFAQLASEFDTLDELKESLKGQVEQQLKNTQAGEIRDKVLAEALEQTEFELPEGVVKEQVDAQIQQIIQQFGGDEKVFESMLAAQDMTREKFEEDARSSAEDSVRTQLFLDAVADKEQPEVSQEELMDHIAFTANQYGMDPNQFIMQLQQAGQLGSLFADVRRGKALALNIARTSVKDTDGADVDPKEYFGDVEAEGDKADKAETDKAEEKPKKAPAKKSTTKKSTAKKSTAKKSTAKKSTAKKSTAKKSTTKKATKSTAKKSTAKKTTAKKAAEKKED</sequence>
<name>TIG_CORJK</name>